<protein>
    <recommendedName>
        <fullName>Actin-related protein 2/3 complex subunit 1</fullName>
    </recommendedName>
    <alternativeName>
        <fullName>Arp2/3 complex 41 kDa subunit</fullName>
    </alternativeName>
    <alternativeName>
        <fullName>p41-ARC</fullName>
    </alternativeName>
</protein>
<proteinExistence type="evidence at protein level"/>
<sequence length="384" mass="42475">MSFSNSKDKSVVAVYKLVKAPIYSHCFSQDKSILAVTCETDCLVYRVSNNTPPVLFATLKDHDKTITAVDISIHGRIVTCSQDRNAYVWEPLSDGTYKPTLVLLRINRAATSVTWAPNGYKFAVGSSARIIAVCYYEHENNWWVSKHIKKPIKSTINCLSWHANGVLLAAGGTDGFMRVFSGFIKGLDSKESVAGSPWGQKFPFGCLIREWYQGSYIHDVEWRSQMERIAYVAHDGTLNVVDYQSPVQSVNAPEGLPYRSLVWINDHEIVCGGYSCHPVLFSEASEGWKFAKNLDKSDNNKSSALTASGNTDELSGNNDESSTFGISALRKFKELDLKGKVSTDVQESAHENAIVELRPFAESNGQITQVSSCGLDGKIVIYTI</sequence>
<comment type="function">
    <text evidence="1">Functions as a component of the Arp2/3 complex which is involved in regulation of actin polymerization and together with an activating nucleation-promoting factor (NPF) mediates the formation of branched actin networks.</text>
</comment>
<comment type="subunit">
    <text evidence="2">Component of the Arp2/3 complex composed of ARP2, ARP3, ARC40/p41-ARC, ARC35/p34-ARC, ARC18/p21-ARC, ARC19/p20-ARC and ARC16/p16-ARC.</text>
</comment>
<comment type="interaction">
    <interactant intactId="EBI-2777">
        <id>P38328</id>
    </interactant>
    <interactant intactId="EBI-2764">
        <id>Q05933</id>
        <label>ARC18</label>
    </interactant>
    <organismsDiffer>false</organismsDiffer>
    <experiments>5</experiments>
</comment>
<comment type="interaction">
    <interactant intactId="EBI-2777">
        <id>P38328</id>
    </interactant>
    <interactant intactId="EBI-2757">
        <id>P33204</id>
        <label>ARC19</label>
    </interactant>
    <organismsDiffer>false</organismsDiffer>
    <experiments>5</experiments>
</comment>
<comment type="interaction">
    <interactant intactId="EBI-2777">
        <id>P38328</id>
    </interactant>
    <interactant intactId="EBI-2770">
        <id>P53731</id>
        <label>ARC35</label>
    </interactant>
    <organismsDiffer>false</organismsDiffer>
    <experiments>7</experiments>
</comment>
<comment type="interaction">
    <interactant intactId="EBI-2777">
        <id>P38328</id>
    </interactant>
    <interactant intactId="EBI-2927">
        <id>P32381</id>
        <label>ARP2</label>
    </interactant>
    <organismsDiffer>false</organismsDiffer>
    <experiments>7</experiments>
</comment>
<comment type="interaction">
    <interactant intactId="EBI-2777">
        <id>P38328</id>
    </interactant>
    <interactant intactId="EBI-2933">
        <id>P47117</id>
        <label>ARP3</label>
    </interactant>
    <organismsDiffer>false</organismsDiffer>
    <experiments>5</experiments>
</comment>
<comment type="interaction">
    <interactant intactId="EBI-2777">
        <id>P38328</id>
    </interactant>
    <interactant intactId="EBI-10022">
        <id>Q12446</id>
        <label>LAS17</label>
    </interactant>
    <organismsDiffer>false</organismsDiffer>
    <experiments>3</experiments>
</comment>
<comment type="interaction">
    <interactant intactId="EBI-2777">
        <id>P38328</id>
    </interactant>
    <interactant intactId="EBI-11670">
        <id>P36006</id>
        <label>MYO3</label>
    </interactant>
    <organismsDiffer>false</organismsDiffer>
    <experiments>3</experiments>
</comment>
<comment type="interaction">
    <interactant intactId="EBI-2777">
        <id>P38328</id>
    </interactant>
    <interactant intactId="EBI-11687">
        <id>Q04439</id>
        <label>MYO5</label>
    </interactant>
    <organismsDiffer>false</organismsDiffer>
    <experiments>4</experiments>
</comment>
<comment type="subcellular location">
    <subcellularLocation>
        <location>Cytoplasm</location>
        <location>Cytoskeleton</location>
        <location>Actin patch</location>
    </subcellularLocation>
</comment>
<comment type="similarity">
    <text evidence="3">Belongs to the WD repeat ARPC1 family.</text>
</comment>
<evidence type="ECO:0000250" key="1"/>
<evidence type="ECO:0000269" key="2">
    <source>
    </source>
</evidence>
<evidence type="ECO:0000305" key="3"/>
<gene>
    <name type="primary">ARC40</name>
    <name type="ordered locus">YBR234C</name>
    <name type="ORF">YBR1532</name>
</gene>
<name>ARPC1_YEAST</name>
<dbReference type="EMBL" id="Z36103">
    <property type="protein sequence ID" value="CAA85197.1"/>
    <property type="molecule type" value="Genomic_DNA"/>
</dbReference>
<dbReference type="EMBL" id="AY692758">
    <property type="protein sequence ID" value="AAT92777.1"/>
    <property type="molecule type" value="Genomic_DNA"/>
</dbReference>
<dbReference type="EMBL" id="BK006936">
    <property type="protein sequence ID" value="DAA07350.1"/>
    <property type="molecule type" value="Genomic_DNA"/>
</dbReference>
<dbReference type="PIR" id="S46110">
    <property type="entry name" value="S46110"/>
</dbReference>
<dbReference type="RefSeq" id="NP_009793.1">
    <property type="nucleotide sequence ID" value="NM_001178582.1"/>
</dbReference>
<dbReference type="SMR" id="P38328"/>
<dbReference type="BioGRID" id="32929">
    <property type="interactions" value="202"/>
</dbReference>
<dbReference type="ComplexPortal" id="CPX-607">
    <property type="entry name" value="Actin-related protein 2/3 complex"/>
</dbReference>
<dbReference type="DIP" id="DIP-2219N"/>
<dbReference type="FunCoup" id="P38328">
    <property type="interactions" value="963"/>
</dbReference>
<dbReference type="IntAct" id="P38328">
    <property type="interactions" value="73"/>
</dbReference>
<dbReference type="MINT" id="P38328"/>
<dbReference type="STRING" id="4932.YBR234C"/>
<dbReference type="iPTMnet" id="P38328"/>
<dbReference type="PaxDb" id="4932-YBR234C"/>
<dbReference type="PeptideAtlas" id="P38328"/>
<dbReference type="EnsemblFungi" id="YBR234C_mRNA">
    <property type="protein sequence ID" value="YBR234C"/>
    <property type="gene ID" value="YBR234C"/>
</dbReference>
<dbReference type="GeneID" id="852536"/>
<dbReference type="KEGG" id="sce:YBR234C"/>
<dbReference type="AGR" id="SGD:S000000438"/>
<dbReference type="SGD" id="S000000438">
    <property type="gene designation" value="ARC40"/>
</dbReference>
<dbReference type="VEuPathDB" id="FungiDB:YBR234C"/>
<dbReference type="eggNOG" id="KOG1523">
    <property type="taxonomic scope" value="Eukaryota"/>
</dbReference>
<dbReference type="GeneTree" id="ENSGT00950000183183"/>
<dbReference type="HOGENOM" id="CLU_034396_1_0_1"/>
<dbReference type="InParanoid" id="P38328"/>
<dbReference type="OMA" id="YVWEPSP"/>
<dbReference type="OrthoDB" id="406844at2759"/>
<dbReference type="BioCyc" id="YEAST:G3O-29165-MONOMER"/>
<dbReference type="Reactome" id="R-SCE-2029482">
    <property type="pathway name" value="Regulation of actin dynamics for phagocytic cup formation"/>
</dbReference>
<dbReference type="Reactome" id="R-SCE-5663213">
    <property type="pathway name" value="RHO GTPases Activate WASPs and WAVEs"/>
</dbReference>
<dbReference type="BioGRID-ORCS" id="852536">
    <property type="hits" value="9 hits in 10 CRISPR screens"/>
</dbReference>
<dbReference type="PRO" id="PR:P38328"/>
<dbReference type="Proteomes" id="UP000002311">
    <property type="component" value="Chromosome II"/>
</dbReference>
<dbReference type="RNAct" id="P38328">
    <property type="molecule type" value="protein"/>
</dbReference>
<dbReference type="GO" id="GO:0030479">
    <property type="term" value="C:actin cortical patch"/>
    <property type="evidence" value="ECO:0007669"/>
    <property type="project" value="UniProtKB-SubCell"/>
</dbReference>
<dbReference type="GO" id="GO:0015629">
    <property type="term" value="C:actin cytoskeleton"/>
    <property type="evidence" value="ECO:0000303"/>
    <property type="project" value="ComplexPortal"/>
</dbReference>
<dbReference type="GO" id="GO:0005885">
    <property type="term" value="C:Arp2/3 protein complex"/>
    <property type="evidence" value="ECO:0000314"/>
    <property type="project" value="SGD"/>
</dbReference>
<dbReference type="GO" id="GO:0051015">
    <property type="term" value="F:actin filament binding"/>
    <property type="evidence" value="ECO:0000318"/>
    <property type="project" value="GO_Central"/>
</dbReference>
<dbReference type="GO" id="GO:0043130">
    <property type="term" value="F:ubiquitin binding"/>
    <property type="evidence" value="ECO:0000314"/>
    <property type="project" value="SGD"/>
</dbReference>
<dbReference type="GO" id="GO:0044396">
    <property type="term" value="P:actin cortical patch organization"/>
    <property type="evidence" value="ECO:0000315"/>
    <property type="project" value="SGD"/>
</dbReference>
<dbReference type="GO" id="GO:0045010">
    <property type="term" value="P:actin nucleation"/>
    <property type="evidence" value="ECO:0000303"/>
    <property type="project" value="ComplexPortal"/>
</dbReference>
<dbReference type="GO" id="GO:0034314">
    <property type="term" value="P:Arp2/3 complex-mediated actin nucleation"/>
    <property type="evidence" value="ECO:0000318"/>
    <property type="project" value="GO_Central"/>
</dbReference>
<dbReference type="GO" id="GO:2000601">
    <property type="term" value="P:positive regulation of Arp2/3 complex-mediated actin nucleation"/>
    <property type="evidence" value="ECO:0000315"/>
    <property type="project" value="SGD"/>
</dbReference>
<dbReference type="FunFam" id="2.130.10.10:FF:000682">
    <property type="entry name" value="Actin-related protein 2/3 complex subunit"/>
    <property type="match status" value="1"/>
</dbReference>
<dbReference type="Gene3D" id="2.130.10.10">
    <property type="entry name" value="YVTN repeat-like/Quinoprotein amine dehydrogenase"/>
    <property type="match status" value="1"/>
</dbReference>
<dbReference type="InterPro" id="IPR017383">
    <property type="entry name" value="ARPC1"/>
</dbReference>
<dbReference type="InterPro" id="IPR015943">
    <property type="entry name" value="WD40/YVTN_repeat-like_dom_sf"/>
</dbReference>
<dbReference type="InterPro" id="IPR036322">
    <property type="entry name" value="WD40_repeat_dom_sf"/>
</dbReference>
<dbReference type="InterPro" id="IPR001680">
    <property type="entry name" value="WD40_rpt"/>
</dbReference>
<dbReference type="PANTHER" id="PTHR10709">
    <property type="entry name" value="ACTIN-RELATED PROTEIN 2/3 COMPLEX SUBUNIT 1"/>
    <property type="match status" value="1"/>
</dbReference>
<dbReference type="PANTHER" id="PTHR10709:SF2">
    <property type="entry name" value="ACTIN-RELATED PROTEIN 2_3 COMPLEX SUBUNIT"/>
    <property type="match status" value="1"/>
</dbReference>
<dbReference type="Pfam" id="PF00400">
    <property type="entry name" value="WD40"/>
    <property type="match status" value="2"/>
</dbReference>
<dbReference type="PIRSF" id="PIRSF038093">
    <property type="entry name" value="ARP2/3_su1"/>
    <property type="match status" value="1"/>
</dbReference>
<dbReference type="SMART" id="SM00320">
    <property type="entry name" value="WD40"/>
    <property type="match status" value="5"/>
</dbReference>
<dbReference type="SUPFAM" id="SSF50978">
    <property type="entry name" value="WD40 repeat-like"/>
    <property type="match status" value="1"/>
</dbReference>
<feature type="chain" id="PRO_0000050859" description="Actin-related protein 2/3 complex subunit 1">
    <location>
        <begin position="1"/>
        <end position="384"/>
    </location>
</feature>
<feature type="repeat" description="WD 1">
    <location>
        <begin position="61"/>
        <end position="99"/>
    </location>
</feature>
<feature type="repeat" description="WD 2">
    <location>
        <begin position="105"/>
        <end position="146"/>
    </location>
</feature>
<feature type="repeat" description="WD 3">
    <location>
        <begin position="151"/>
        <end position="190"/>
    </location>
</feature>
<feature type="repeat" description="WD 4">
    <location>
        <begin position="212"/>
        <end position="251"/>
    </location>
</feature>
<feature type="repeat" description="WD 5">
    <location>
        <begin position="349"/>
        <end position="383"/>
    </location>
</feature>
<accession>P38328</accession>
<accession>D6VQN0</accession>
<reference key="1">
    <citation type="journal article" date="1994" name="EMBO J.">
        <title>Complete DNA sequence of yeast chromosome II.</title>
        <authorList>
            <person name="Feldmann H."/>
            <person name="Aigle M."/>
            <person name="Aljinovic G."/>
            <person name="Andre B."/>
            <person name="Baclet M.C."/>
            <person name="Barthe C."/>
            <person name="Baur A."/>
            <person name="Becam A.-M."/>
            <person name="Biteau N."/>
            <person name="Boles E."/>
            <person name="Brandt T."/>
            <person name="Brendel M."/>
            <person name="Brueckner M."/>
            <person name="Bussereau F."/>
            <person name="Christiansen C."/>
            <person name="Contreras R."/>
            <person name="Crouzet M."/>
            <person name="Cziepluch C."/>
            <person name="Demolis N."/>
            <person name="Delaveau T."/>
            <person name="Doignon F."/>
            <person name="Domdey H."/>
            <person name="Duesterhus S."/>
            <person name="Dubois E."/>
            <person name="Dujon B."/>
            <person name="El Bakkoury M."/>
            <person name="Entian K.-D."/>
            <person name="Feuermann M."/>
            <person name="Fiers W."/>
            <person name="Fobo G.M."/>
            <person name="Fritz C."/>
            <person name="Gassenhuber J."/>
            <person name="Glansdorff N."/>
            <person name="Goffeau A."/>
            <person name="Grivell L.A."/>
            <person name="de Haan M."/>
            <person name="Hein C."/>
            <person name="Herbert C.J."/>
            <person name="Hollenberg C.P."/>
            <person name="Holmstroem K."/>
            <person name="Jacq C."/>
            <person name="Jacquet M."/>
            <person name="Jauniaux J.-C."/>
            <person name="Jonniaux J.-L."/>
            <person name="Kallesoee T."/>
            <person name="Kiesau P."/>
            <person name="Kirchrath L."/>
            <person name="Koetter P."/>
            <person name="Korol S."/>
            <person name="Liebl S."/>
            <person name="Logghe M."/>
            <person name="Lohan A.J.E."/>
            <person name="Louis E.J."/>
            <person name="Li Z.Y."/>
            <person name="Maat M.J."/>
            <person name="Mallet L."/>
            <person name="Mannhaupt G."/>
            <person name="Messenguy F."/>
            <person name="Miosga T."/>
            <person name="Molemans F."/>
            <person name="Mueller S."/>
            <person name="Nasr F."/>
            <person name="Obermaier B."/>
            <person name="Perea J."/>
            <person name="Pierard A."/>
            <person name="Piravandi E."/>
            <person name="Pohl F.M."/>
            <person name="Pohl T.M."/>
            <person name="Potier S."/>
            <person name="Proft M."/>
            <person name="Purnelle B."/>
            <person name="Ramezani Rad M."/>
            <person name="Rieger M."/>
            <person name="Rose M."/>
            <person name="Schaaff-Gerstenschlaeger I."/>
            <person name="Scherens B."/>
            <person name="Schwarzlose C."/>
            <person name="Skala J."/>
            <person name="Slonimski P.P."/>
            <person name="Smits P.H.M."/>
            <person name="Souciet J.-L."/>
            <person name="Steensma H.Y."/>
            <person name="Stucka R."/>
            <person name="Urrestarazu L.A."/>
            <person name="van der Aart Q.J.M."/>
            <person name="Van Dyck L."/>
            <person name="Vassarotti A."/>
            <person name="Vetter I."/>
            <person name="Vierendeels F."/>
            <person name="Vissers S."/>
            <person name="Wagner G."/>
            <person name="de Wergifosse P."/>
            <person name="Wolfe K.H."/>
            <person name="Zagulski M."/>
            <person name="Zimmermann F.K."/>
            <person name="Mewes H.-W."/>
            <person name="Kleine K."/>
        </authorList>
    </citation>
    <scope>NUCLEOTIDE SEQUENCE [LARGE SCALE GENOMIC DNA]</scope>
    <source>
        <strain>ATCC 204508 / S288c</strain>
    </source>
</reference>
<reference key="2">
    <citation type="journal article" date="2014" name="G3 (Bethesda)">
        <title>The reference genome sequence of Saccharomyces cerevisiae: Then and now.</title>
        <authorList>
            <person name="Engel S.R."/>
            <person name="Dietrich F.S."/>
            <person name="Fisk D.G."/>
            <person name="Binkley G."/>
            <person name="Balakrishnan R."/>
            <person name="Costanzo M.C."/>
            <person name="Dwight S.S."/>
            <person name="Hitz B.C."/>
            <person name="Karra K."/>
            <person name="Nash R.S."/>
            <person name="Weng S."/>
            <person name="Wong E.D."/>
            <person name="Lloyd P."/>
            <person name="Skrzypek M.S."/>
            <person name="Miyasato S.R."/>
            <person name="Simison M."/>
            <person name="Cherry J.M."/>
        </authorList>
    </citation>
    <scope>GENOME REANNOTATION</scope>
    <source>
        <strain>ATCC 204508 / S288c</strain>
    </source>
</reference>
<reference key="3">
    <citation type="journal article" date="2007" name="Genome Res.">
        <title>Approaching a complete repository of sequence-verified protein-encoding clones for Saccharomyces cerevisiae.</title>
        <authorList>
            <person name="Hu Y."/>
            <person name="Rolfs A."/>
            <person name="Bhullar B."/>
            <person name="Murthy T.V.S."/>
            <person name="Zhu C."/>
            <person name="Berger M.F."/>
            <person name="Camargo A.A."/>
            <person name="Kelley F."/>
            <person name="McCarron S."/>
            <person name="Jepson D."/>
            <person name="Richardson A."/>
            <person name="Raphael J."/>
            <person name="Moreira D."/>
            <person name="Taycher E."/>
            <person name="Zuo D."/>
            <person name="Mohr S."/>
            <person name="Kane M.F."/>
            <person name="Williamson J."/>
            <person name="Simpson A.J.G."/>
            <person name="Bulyk M.L."/>
            <person name="Harlow E."/>
            <person name="Marsischky G."/>
            <person name="Kolodner R.D."/>
            <person name="LaBaer J."/>
        </authorList>
    </citation>
    <scope>NUCLEOTIDE SEQUENCE [GENOMIC DNA]</scope>
    <source>
        <strain>ATCC 204508 / S288c</strain>
    </source>
</reference>
<reference key="4">
    <citation type="journal article" date="1999" name="Proc. Natl. Acad. Sci. U.S.A.">
        <title>Genetic dissection of the budding yeast Arp2/3 complex: a comparison of the in vivo and structural roles of individual subunits.</title>
        <authorList>
            <person name="Winter D.C."/>
            <person name="Choe E.Y."/>
            <person name="Li R."/>
        </authorList>
    </citation>
    <scope>IDENTIFICATION IN THE ARP2/3 COMPLEX</scope>
</reference>
<reference key="5">
    <citation type="journal article" date="2009" name="Science">
        <title>Global analysis of Cdk1 substrate phosphorylation sites provides insights into evolution.</title>
        <authorList>
            <person name="Holt L.J."/>
            <person name="Tuch B.B."/>
            <person name="Villen J."/>
            <person name="Johnson A.D."/>
            <person name="Gygi S.P."/>
            <person name="Morgan D.O."/>
        </authorList>
    </citation>
    <scope>IDENTIFICATION BY MASS SPECTROMETRY [LARGE SCALE ANALYSIS]</scope>
</reference>
<organism>
    <name type="scientific">Saccharomyces cerevisiae (strain ATCC 204508 / S288c)</name>
    <name type="common">Baker's yeast</name>
    <dbReference type="NCBI Taxonomy" id="559292"/>
    <lineage>
        <taxon>Eukaryota</taxon>
        <taxon>Fungi</taxon>
        <taxon>Dikarya</taxon>
        <taxon>Ascomycota</taxon>
        <taxon>Saccharomycotina</taxon>
        <taxon>Saccharomycetes</taxon>
        <taxon>Saccharomycetales</taxon>
        <taxon>Saccharomycetaceae</taxon>
        <taxon>Saccharomyces</taxon>
    </lineage>
</organism>
<keyword id="KW-0009">Actin-binding</keyword>
<keyword id="KW-0963">Cytoplasm</keyword>
<keyword id="KW-0206">Cytoskeleton</keyword>
<keyword id="KW-1185">Reference proteome</keyword>
<keyword id="KW-0677">Repeat</keyword>
<keyword id="KW-0853">WD repeat</keyword>